<comment type="function">
    <text evidence="1">One of the primary rRNA binding proteins, it binds directly to 16S rRNA where it nucleates assembly of the head domain of the 30S subunit.</text>
</comment>
<comment type="subunit">
    <text evidence="1">Part of the 30S ribosomal subunit.</text>
</comment>
<comment type="subcellular location">
    <subcellularLocation>
        <location>Plastid</location>
        <location>Chloroplast</location>
    </subcellularLocation>
</comment>
<comment type="similarity">
    <text evidence="3">Belongs to the universal ribosomal protein uS7 family.</text>
</comment>
<reference key="1">
    <citation type="submission" date="2007-03" db="EMBL/GenBank/DDBJ databases">
        <title>Sequencing analysis of Barbarea verna chloroplast DNA.</title>
        <authorList>
            <person name="Hosouchi T."/>
            <person name="Tsuruoka H."/>
            <person name="Kotani H."/>
        </authorList>
    </citation>
    <scope>NUCLEOTIDE SEQUENCE [LARGE SCALE GENOMIC DNA]</scope>
</reference>
<gene>
    <name type="primary">rps7-A</name>
</gene>
<gene>
    <name type="primary">rps7-B</name>
</gene>
<protein>
    <recommendedName>
        <fullName evidence="2">Small ribosomal subunit protein uS7cz/uS7cy</fullName>
    </recommendedName>
    <alternativeName>
        <fullName>30S ribosomal protein S7, chloroplastic</fullName>
    </alternativeName>
</protein>
<proteinExistence type="inferred from homology"/>
<sequence length="155" mass="17357">MSRRGTAEEKTAKSDPIYRNRLVNMLVNRILKHGKKSLAYQIIYRALKKIQQKTETNPLSVLRQAIRGVTPDIAVKARRVGGSTHQVPIEIGSTQGKALAIRWLLGASRKRPGRNMAFKLSSELVDAAKGSGDAIRKKEETHRMAEANRAFAHFR</sequence>
<dbReference type="EMBL" id="AP009370">
    <property type="protein sequence ID" value="BAF50156.1"/>
    <property type="molecule type" value="Genomic_DNA"/>
</dbReference>
<dbReference type="EMBL" id="AP009370">
    <property type="protein sequence ID" value="BAF50171.1"/>
    <property type="molecule type" value="Genomic_DNA"/>
</dbReference>
<dbReference type="SMR" id="A4QKF1"/>
<dbReference type="GO" id="GO:0009507">
    <property type="term" value="C:chloroplast"/>
    <property type="evidence" value="ECO:0007669"/>
    <property type="project" value="UniProtKB-SubCell"/>
</dbReference>
<dbReference type="GO" id="GO:0015935">
    <property type="term" value="C:small ribosomal subunit"/>
    <property type="evidence" value="ECO:0007669"/>
    <property type="project" value="InterPro"/>
</dbReference>
<dbReference type="GO" id="GO:0019843">
    <property type="term" value="F:rRNA binding"/>
    <property type="evidence" value="ECO:0007669"/>
    <property type="project" value="UniProtKB-UniRule"/>
</dbReference>
<dbReference type="GO" id="GO:0003735">
    <property type="term" value="F:structural constituent of ribosome"/>
    <property type="evidence" value="ECO:0007669"/>
    <property type="project" value="InterPro"/>
</dbReference>
<dbReference type="GO" id="GO:0006412">
    <property type="term" value="P:translation"/>
    <property type="evidence" value="ECO:0007669"/>
    <property type="project" value="UniProtKB-UniRule"/>
</dbReference>
<dbReference type="CDD" id="cd14871">
    <property type="entry name" value="uS7_Chloroplast"/>
    <property type="match status" value="1"/>
</dbReference>
<dbReference type="FunFam" id="1.10.455.10:FF:000001">
    <property type="entry name" value="30S ribosomal protein S7"/>
    <property type="match status" value="1"/>
</dbReference>
<dbReference type="Gene3D" id="1.10.455.10">
    <property type="entry name" value="Ribosomal protein S7 domain"/>
    <property type="match status" value="1"/>
</dbReference>
<dbReference type="HAMAP" id="MF_00480_B">
    <property type="entry name" value="Ribosomal_uS7_B"/>
    <property type="match status" value="1"/>
</dbReference>
<dbReference type="InterPro" id="IPR000235">
    <property type="entry name" value="Ribosomal_uS7"/>
</dbReference>
<dbReference type="InterPro" id="IPR005717">
    <property type="entry name" value="Ribosomal_uS7_bac/org-type"/>
</dbReference>
<dbReference type="InterPro" id="IPR020606">
    <property type="entry name" value="Ribosomal_uS7_CS"/>
</dbReference>
<dbReference type="InterPro" id="IPR023798">
    <property type="entry name" value="Ribosomal_uS7_dom"/>
</dbReference>
<dbReference type="InterPro" id="IPR036823">
    <property type="entry name" value="Ribosomal_uS7_dom_sf"/>
</dbReference>
<dbReference type="NCBIfam" id="TIGR01029">
    <property type="entry name" value="rpsG_bact"/>
    <property type="match status" value="1"/>
</dbReference>
<dbReference type="PANTHER" id="PTHR11205">
    <property type="entry name" value="RIBOSOMAL PROTEIN S7"/>
    <property type="match status" value="1"/>
</dbReference>
<dbReference type="Pfam" id="PF00177">
    <property type="entry name" value="Ribosomal_S7"/>
    <property type="match status" value="1"/>
</dbReference>
<dbReference type="PIRSF" id="PIRSF002122">
    <property type="entry name" value="RPS7p_RPS7a_RPS5e_RPS7o"/>
    <property type="match status" value="1"/>
</dbReference>
<dbReference type="SUPFAM" id="SSF47973">
    <property type="entry name" value="Ribosomal protein S7"/>
    <property type="match status" value="1"/>
</dbReference>
<dbReference type="PROSITE" id="PS00052">
    <property type="entry name" value="RIBOSOMAL_S7"/>
    <property type="match status" value="1"/>
</dbReference>
<organism>
    <name type="scientific">Barbarea verna</name>
    <name type="common">Land cress</name>
    <name type="synonym">Erysimum vernum</name>
    <dbReference type="NCBI Taxonomy" id="50458"/>
    <lineage>
        <taxon>Eukaryota</taxon>
        <taxon>Viridiplantae</taxon>
        <taxon>Streptophyta</taxon>
        <taxon>Embryophyta</taxon>
        <taxon>Tracheophyta</taxon>
        <taxon>Spermatophyta</taxon>
        <taxon>Magnoliopsida</taxon>
        <taxon>eudicotyledons</taxon>
        <taxon>Gunneridae</taxon>
        <taxon>Pentapetalae</taxon>
        <taxon>rosids</taxon>
        <taxon>malvids</taxon>
        <taxon>Brassicales</taxon>
        <taxon>Brassicaceae</taxon>
        <taxon>Cardamineae</taxon>
        <taxon>Barbarea</taxon>
    </lineage>
</organism>
<keyword id="KW-0150">Chloroplast</keyword>
<keyword id="KW-0934">Plastid</keyword>
<keyword id="KW-0687">Ribonucleoprotein</keyword>
<keyword id="KW-0689">Ribosomal protein</keyword>
<keyword id="KW-0694">RNA-binding</keyword>
<keyword id="KW-0699">rRNA-binding</keyword>
<name>RR7_BARVE</name>
<geneLocation type="chloroplast"/>
<feature type="chain" id="PRO_0000344326" description="Small ribosomal subunit protein uS7cz/uS7cy">
    <location>
        <begin position="1"/>
        <end position="155"/>
    </location>
</feature>
<accession>A4QKF1</accession>
<evidence type="ECO:0000250" key="1"/>
<evidence type="ECO:0000255" key="2">
    <source>
        <dbReference type="HAMAP-Rule" id="MF_00480"/>
    </source>
</evidence>
<evidence type="ECO:0000305" key="3"/>